<evidence type="ECO:0000255" key="1">
    <source>
        <dbReference type="HAMAP-Rule" id="MF_00181"/>
    </source>
</evidence>
<evidence type="ECO:0000256" key="2">
    <source>
        <dbReference type="SAM" id="MobiDB-lite"/>
    </source>
</evidence>
<accession>Q12AW5</accession>
<dbReference type="EC" id="3.4.11.1" evidence="1"/>
<dbReference type="EC" id="3.4.11.10" evidence="1"/>
<dbReference type="EMBL" id="CP000316">
    <property type="protein sequence ID" value="ABE44327.1"/>
    <property type="molecule type" value="Genomic_DNA"/>
</dbReference>
<dbReference type="RefSeq" id="WP_011483325.1">
    <property type="nucleotide sequence ID" value="NC_007948.1"/>
</dbReference>
<dbReference type="SMR" id="Q12AW5"/>
<dbReference type="STRING" id="296591.Bpro_2408"/>
<dbReference type="KEGG" id="pol:Bpro_2408"/>
<dbReference type="eggNOG" id="COG0260">
    <property type="taxonomic scope" value="Bacteria"/>
</dbReference>
<dbReference type="HOGENOM" id="CLU_013734_0_1_4"/>
<dbReference type="OrthoDB" id="9809354at2"/>
<dbReference type="Proteomes" id="UP000001983">
    <property type="component" value="Chromosome"/>
</dbReference>
<dbReference type="GO" id="GO:0005737">
    <property type="term" value="C:cytoplasm"/>
    <property type="evidence" value="ECO:0007669"/>
    <property type="project" value="UniProtKB-SubCell"/>
</dbReference>
<dbReference type="GO" id="GO:0030145">
    <property type="term" value="F:manganese ion binding"/>
    <property type="evidence" value="ECO:0007669"/>
    <property type="project" value="UniProtKB-UniRule"/>
</dbReference>
<dbReference type="GO" id="GO:0070006">
    <property type="term" value="F:metalloaminopeptidase activity"/>
    <property type="evidence" value="ECO:0007669"/>
    <property type="project" value="InterPro"/>
</dbReference>
<dbReference type="GO" id="GO:0006508">
    <property type="term" value="P:proteolysis"/>
    <property type="evidence" value="ECO:0007669"/>
    <property type="project" value="UniProtKB-KW"/>
</dbReference>
<dbReference type="CDD" id="cd00433">
    <property type="entry name" value="Peptidase_M17"/>
    <property type="match status" value="1"/>
</dbReference>
<dbReference type="Gene3D" id="3.40.220.10">
    <property type="entry name" value="Leucine Aminopeptidase, subunit E, domain 1"/>
    <property type="match status" value="1"/>
</dbReference>
<dbReference type="Gene3D" id="3.40.630.10">
    <property type="entry name" value="Zn peptidases"/>
    <property type="match status" value="1"/>
</dbReference>
<dbReference type="HAMAP" id="MF_00181">
    <property type="entry name" value="Cytosol_peptidase_M17"/>
    <property type="match status" value="1"/>
</dbReference>
<dbReference type="InterPro" id="IPR011356">
    <property type="entry name" value="Leucine_aapep/pepB"/>
</dbReference>
<dbReference type="InterPro" id="IPR043472">
    <property type="entry name" value="Macro_dom-like"/>
</dbReference>
<dbReference type="InterPro" id="IPR000819">
    <property type="entry name" value="Peptidase_M17_C"/>
</dbReference>
<dbReference type="InterPro" id="IPR023042">
    <property type="entry name" value="Peptidase_M17_leu_NH2_pept"/>
</dbReference>
<dbReference type="InterPro" id="IPR008283">
    <property type="entry name" value="Peptidase_M17_N"/>
</dbReference>
<dbReference type="NCBIfam" id="NF002074">
    <property type="entry name" value="PRK00913.1-4"/>
    <property type="match status" value="1"/>
</dbReference>
<dbReference type="PANTHER" id="PTHR11963:SF23">
    <property type="entry name" value="CYTOSOL AMINOPEPTIDASE"/>
    <property type="match status" value="1"/>
</dbReference>
<dbReference type="PANTHER" id="PTHR11963">
    <property type="entry name" value="LEUCINE AMINOPEPTIDASE-RELATED"/>
    <property type="match status" value="1"/>
</dbReference>
<dbReference type="Pfam" id="PF00883">
    <property type="entry name" value="Peptidase_M17"/>
    <property type="match status" value="1"/>
</dbReference>
<dbReference type="Pfam" id="PF02789">
    <property type="entry name" value="Peptidase_M17_N"/>
    <property type="match status" value="1"/>
</dbReference>
<dbReference type="PRINTS" id="PR00481">
    <property type="entry name" value="LAMNOPPTDASE"/>
</dbReference>
<dbReference type="SUPFAM" id="SSF52949">
    <property type="entry name" value="Macro domain-like"/>
    <property type="match status" value="1"/>
</dbReference>
<dbReference type="SUPFAM" id="SSF53187">
    <property type="entry name" value="Zn-dependent exopeptidases"/>
    <property type="match status" value="1"/>
</dbReference>
<dbReference type="PROSITE" id="PS00631">
    <property type="entry name" value="CYTOSOL_AP"/>
    <property type="match status" value="1"/>
</dbReference>
<gene>
    <name evidence="1" type="primary">pepA</name>
    <name type="ordered locus">Bpro_2408</name>
</gene>
<name>AMPA_POLSJ</name>
<comment type="function">
    <text evidence="1">Presumably involved in the processing and regular turnover of intracellular proteins. Catalyzes the removal of unsubstituted N-terminal amino acids from various peptides.</text>
</comment>
<comment type="catalytic activity">
    <reaction evidence="1">
        <text>Release of an N-terminal amino acid, Xaa-|-Yaa-, in which Xaa is preferably Leu, but may be other amino acids including Pro although not Arg or Lys, and Yaa may be Pro. Amino acid amides and methyl esters are also readily hydrolyzed, but rates on arylamides are exceedingly low.</text>
        <dbReference type="EC" id="3.4.11.1"/>
    </reaction>
</comment>
<comment type="catalytic activity">
    <reaction evidence="1">
        <text>Release of an N-terminal amino acid, preferentially leucine, but not glutamic or aspartic acids.</text>
        <dbReference type="EC" id="3.4.11.10"/>
    </reaction>
</comment>
<comment type="cofactor">
    <cofactor evidence="1">
        <name>Mn(2+)</name>
        <dbReference type="ChEBI" id="CHEBI:29035"/>
    </cofactor>
    <text evidence="1">Binds 2 manganese ions per subunit.</text>
</comment>
<comment type="subcellular location">
    <subcellularLocation>
        <location evidence="1">Cytoplasm</location>
    </subcellularLocation>
</comment>
<comment type="similarity">
    <text evidence="1">Belongs to the peptidase M17 family.</text>
</comment>
<sequence>MDFELKLLPLARICSEKCDALLVLIPQDLSAGGDDPLSALAALALKAGDLEAKPGKLLSAYRTPGIAATRVVLAGVGDASPRNVRTAVNAAMANLKNGNTQRVVVSLAAMNNAQPEIVRAAVVACSEAAYVYSTTKSKVSPVKLQRVVIGVNELSVARPGFDKALALVKGIEFAKEWANRPANHATPTLLAGAARELARLRNIKVEVLGPKEVAKLGMGSFMAVAQGTSEPLRFIVLRYEGAAKSVAPVVLIGKGITFDTGGISIKPAAEMDEMKFDMCGAASVLGTFRALAELQPALNVVGLIPASENMPGGRALKPGDVVTSMSGQTIEILNTDAEGRLVLCDALTYAERFKPRAVVDIATLTGACVIALGGVRSGLFSNNDELAQSLAAAGESSLDPCWRMPLDDDYAEGLKTNFADVANVAGRAGGAVTAAKFLHRFAGSFPWAHLDIAGTAWKGGAAKGATGRPVPLLLDYLLGQVTAAAPRKAQPKARSAKRSKPVSRTRA</sequence>
<reference key="1">
    <citation type="journal article" date="2008" name="Appl. Environ. Microbiol.">
        <title>The genome of Polaromonas sp. strain JS666: insights into the evolution of a hydrocarbon- and xenobiotic-degrading bacterium, and features of relevance to biotechnology.</title>
        <authorList>
            <person name="Mattes T.E."/>
            <person name="Alexander A.K."/>
            <person name="Richardson P.M."/>
            <person name="Munk A.C."/>
            <person name="Han C.S."/>
            <person name="Stothard P."/>
            <person name="Coleman N.V."/>
        </authorList>
    </citation>
    <scope>NUCLEOTIDE SEQUENCE [LARGE SCALE GENOMIC DNA]</scope>
    <source>
        <strain>JS666 / ATCC BAA-500</strain>
    </source>
</reference>
<keyword id="KW-0031">Aminopeptidase</keyword>
<keyword id="KW-0963">Cytoplasm</keyword>
<keyword id="KW-0378">Hydrolase</keyword>
<keyword id="KW-0464">Manganese</keyword>
<keyword id="KW-0479">Metal-binding</keyword>
<keyword id="KW-0645">Protease</keyword>
<keyword id="KW-1185">Reference proteome</keyword>
<feature type="chain" id="PRO_1000118461" description="Probable cytosol aminopeptidase">
    <location>
        <begin position="1"/>
        <end position="507"/>
    </location>
</feature>
<feature type="region of interest" description="Disordered" evidence="2">
    <location>
        <begin position="486"/>
        <end position="507"/>
    </location>
</feature>
<feature type="compositionally biased region" description="Basic residues" evidence="2">
    <location>
        <begin position="489"/>
        <end position="507"/>
    </location>
</feature>
<feature type="active site" evidence="1">
    <location>
        <position position="266"/>
    </location>
</feature>
<feature type="active site" evidence="1">
    <location>
        <position position="340"/>
    </location>
</feature>
<feature type="binding site" evidence="1">
    <location>
        <position position="254"/>
    </location>
    <ligand>
        <name>Mn(2+)</name>
        <dbReference type="ChEBI" id="CHEBI:29035"/>
        <label>2</label>
    </ligand>
</feature>
<feature type="binding site" evidence="1">
    <location>
        <position position="259"/>
    </location>
    <ligand>
        <name>Mn(2+)</name>
        <dbReference type="ChEBI" id="CHEBI:29035"/>
        <label>1</label>
    </ligand>
</feature>
<feature type="binding site" evidence="1">
    <location>
        <position position="259"/>
    </location>
    <ligand>
        <name>Mn(2+)</name>
        <dbReference type="ChEBI" id="CHEBI:29035"/>
        <label>2</label>
    </ligand>
</feature>
<feature type="binding site" evidence="1">
    <location>
        <position position="277"/>
    </location>
    <ligand>
        <name>Mn(2+)</name>
        <dbReference type="ChEBI" id="CHEBI:29035"/>
        <label>2</label>
    </ligand>
</feature>
<feature type="binding site" evidence="1">
    <location>
        <position position="336"/>
    </location>
    <ligand>
        <name>Mn(2+)</name>
        <dbReference type="ChEBI" id="CHEBI:29035"/>
        <label>1</label>
    </ligand>
</feature>
<feature type="binding site" evidence="1">
    <location>
        <position position="338"/>
    </location>
    <ligand>
        <name>Mn(2+)</name>
        <dbReference type="ChEBI" id="CHEBI:29035"/>
        <label>1</label>
    </ligand>
</feature>
<feature type="binding site" evidence="1">
    <location>
        <position position="338"/>
    </location>
    <ligand>
        <name>Mn(2+)</name>
        <dbReference type="ChEBI" id="CHEBI:29035"/>
        <label>2</label>
    </ligand>
</feature>
<protein>
    <recommendedName>
        <fullName evidence="1">Probable cytosol aminopeptidase</fullName>
        <ecNumber evidence="1">3.4.11.1</ecNumber>
    </recommendedName>
    <alternativeName>
        <fullName evidence="1">Leucine aminopeptidase</fullName>
        <shortName evidence="1">LAP</shortName>
        <ecNumber evidence="1">3.4.11.10</ecNumber>
    </alternativeName>
    <alternativeName>
        <fullName evidence="1">Leucyl aminopeptidase</fullName>
    </alternativeName>
</protein>
<proteinExistence type="inferred from homology"/>
<organism>
    <name type="scientific">Polaromonas sp. (strain JS666 / ATCC BAA-500)</name>
    <dbReference type="NCBI Taxonomy" id="296591"/>
    <lineage>
        <taxon>Bacteria</taxon>
        <taxon>Pseudomonadati</taxon>
        <taxon>Pseudomonadota</taxon>
        <taxon>Betaproteobacteria</taxon>
        <taxon>Burkholderiales</taxon>
        <taxon>Comamonadaceae</taxon>
        <taxon>Polaromonas</taxon>
    </lineage>
</organism>